<geneLocation type="plasmid">
    <name>pNE131</name>
</geneLocation>
<keyword id="KW-0235">DNA replication</keyword>
<keyword id="KW-0614">Plasmid</keyword>
<protein>
    <recommendedName>
        <fullName>Replication and maintenance protein</fullName>
    </recommendedName>
    <alternativeName>
        <fullName>Plasmid replication protein</fullName>
    </alternativeName>
</protein>
<organism>
    <name type="scientific">Staphylococcus epidermidis</name>
    <dbReference type="NCBI Taxonomy" id="1282"/>
    <lineage>
        <taxon>Bacteria</taxon>
        <taxon>Bacillati</taxon>
        <taxon>Bacillota</taxon>
        <taxon>Bacilli</taxon>
        <taxon>Bacillales</taxon>
        <taxon>Staphylococcaceae</taxon>
        <taxon>Staphylococcus</taxon>
    </lineage>
</organism>
<sequence length="162" mass="18447">MKERYGTVYKGSQRLIDEESGEVIEVDKLYRKQTSGNFVKAYIVQLISMLDMIGGKKLKIVNYILDNVHLSNNTMIATTREIAKATGTSLQTVITTLKILEEGNIIKRKTGVLMLNPELLMRGDDQKQKYLLLEFGNFEQEANEKQENALYLIIILSRTSIT</sequence>
<reference key="1">
    <citation type="journal article" date="1986" name="J. Bacteriol.">
        <title>Nucleotide sequence of the constitutive macrolide-lincosamide-streptogramin B resistance plasmid pNE131 from Staphylococcus epidermidis and homologies with Staphylococcus aureus plasmids pE194 and pSN2.</title>
        <authorList>
            <person name="Lampson B.C."/>
            <person name="Parisi J.T."/>
        </authorList>
    </citation>
    <scope>NUCLEOTIDE SEQUENCE [GENOMIC DNA]</scope>
</reference>
<accession>P06735</accession>
<accession>Q52044</accession>
<dbReference type="EMBL" id="M12730">
    <property type="protein sequence ID" value="AAA98295.1"/>
    <property type="molecule type" value="Genomic_DNA"/>
</dbReference>
<dbReference type="PIR" id="B24497">
    <property type="entry name" value="B24497"/>
</dbReference>
<dbReference type="RefSeq" id="NP_040461.1">
    <property type="nucleotide sequence ID" value="NC_001390.1"/>
</dbReference>
<dbReference type="SMR" id="P06735"/>
<dbReference type="GO" id="GO:0003677">
    <property type="term" value="F:DNA binding"/>
    <property type="evidence" value="ECO:0007669"/>
    <property type="project" value="InterPro"/>
</dbReference>
<dbReference type="GO" id="GO:0006260">
    <property type="term" value="P:DNA replication"/>
    <property type="evidence" value="ECO:0007669"/>
    <property type="project" value="UniProtKB-KW"/>
</dbReference>
<dbReference type="GO" id="GO:0006276">
    <property type="term" value="P:plasmid maintenance"/>
    <property type="evidence" value="ECO:0007669"/>
    <property type="project" value="InterPro"/>
</dbReference>
<dbReference type="GO" id="GO:0006355">
    <property type="term" value="P:regulation of DNA-templated transcription"/>
    <property type="evidence" value="ECO:0007669"/>
    <property type="project" value="InterPro"/>
</dbReference>
<dbReference type="CDD" id="cd00092">
    <property type="entry name" value="HTH_CRP"/>
    <property type="match status" value="1"/>
</dbReference>
<dbReference type="Gene3D" id="1.10.10.10">
    <property type="entry name" value="Winged helix-like DNA-binding domain superfamily/Winged helix DNA-binding domain"/>
    <property type="match status" value="1"/>
</dbReference>
<dbReference type="InterPro" id="IPR012318">
    <property type="entry name" value="HTH_CRP"/>
</dbReference>
<dbReference type="InterPro" id="IPR008813">
    <property type="entry name" value="Plasmid_replication_RepL"/>
</dbReference>
<dbReference type="InterPro" id="IPR036388">
    <property type="entry name" value="WH-like_DNA-bd_sf"/>
</dbReference>
<dbReference type="InterPro" id="IPR036390">
    <property type="entry name" value="WH_DNA-bd_sf"/>
</dbReference>
<dbReference type="Pfam" id="PF05732">
    <property type="entry name" value="RepL"/>
    <property type="match status" value="1"/>
</dbReference>
<dbReference type="SMART" id="SM00419">
    <property type="entry name" value="HTH_CRP"/>
    <property type="match status" value="1"/>
</dbReference>
<dbReference type="SUPFAM" id="SSF46785">
    <property type="entry name" value="Winged helix' DNA-binding domain"/>
    <property type="match status" value="1"/>
</dbReference>
<gene>
    <name type="primary">repL</name>
</gene>
<feature type="chain" id="PRO_0000068433" description="Replication and maintenance protein">
    <location>
        <begin position="1"/>
        <end position="162"/>
    </location>
</feature>
<proteinExistence type="predicted"/>
<name>REPLM_STAEP</name>